<dbReference type="EMBL" id="CP001337">
    <property type="protein sequence ID" value="ACL25540.1"/>
    <property type="molecule type" value="Genomic_DNA"/>
</dbReference>
<dbReference type="RefSeq" id="WP_015941397.1">
    <property type="nucleotide sequence ID" value="NC_011831.1"/>
</dbReference>
<dbReference type="SMR" id="B8G4R4"/>
<dbReference type="STRING" id="326427.Cagg_2672"/>
<dbReference type="KEGG" id="cag:Cagg_2672"/>
<dbReference type="eggNOG" id="COG0228">
    <property type="taxonomic scope" value="Bacteria"/>
</dbReference>
<dbReference type="HOGENOM" id="CLU_100590_5_2_0"/>
<dbReference type="OrthoDB" id="9807878at2"/>
<dbReference type="Proteomes" id="UP000002508">
    <property type="component" value="Chromosome"/>
</dbReference>
<dbReference type="GO" id="GO:0005737">
    <property type="term" value="C:cytoplasm"/>
    <property type="evidence" value="ECO:0007669"/>
    <property type="project" value="UniProtKB-ARBA"/>
</dbReference>
<dbReference type="GO" id="GO:0015935">
    <property type="term" value="C:small ribosomal subunit"/>
    <property type="evidence" value="ECO:0007669"/>
    <property type="project" value="TreeGrafter"/>
</dbReference>
<dbReference type="GO" id="GO:0003735">
    <property type="term" value="F:structural constituent of ribosome"/>
    <property type="evidence" value="ECO:0007669"/>
    <property type="project" value="InterPro"/>
</dbReference>
<dbReference type="GO" id="GO:0006412">
    <property type="term" value="P:translation"/>
    <property type="evidence" value="ECO:0007669"/>
    <property type="project" value="UniProtKB-UniRule"/>
</dbReference>
<dbReference type="Gene3D" id="3.30.1320.10">
    <property type="match status" value="1"/>
</dbReference>
<dbReference type="HAMAP" id="MF_00385">
    <property type="entry name" value="Ribosomal_bS16"/>
    <property type="match status" value="1"/>
</dbReference>
<dbReference type="InterPro" id="IPR000307">
    <property type="entry name" value="Ribosomal_bS16"/>
</dbReference>
<dbReference type="InterPro" id="IPR023803">
    <property type="entry name" value="Ribosomal_bS16_dom_sf"/>
</dbReference>
<dbReference type="NCBIfam" id="TIGR00002">
    <property type="entry name" value="S16"/>
    <property type="match status" value="1"/>
</dbReference>
<dbReference type="PANTHER" id="PTHR12919">
    <property type="entry name" value="30S RIBOSOMAL PROTEIN S16"/>
    <property type="match status" value="1"/>
</dbReference>
<dbReference type="PANTHER" id="PTHR12919:SF20">
    <property type="entry name" value="SMALL RIBOSOMAL SUBUNIT PROTEIN BS16M"/>
    <property type="match status" value="1"/>
</dbReference>
<dbReference type="Pfam" id="PF00886">
    <property type="entry name" value="Ribosomal_S16"/>
    <property type="match status" value="1"/>
</dbReference>
<dbReference type="SUPFAM" id="SSF54565">
    <property type="entry name" value="Ribosomal protein S16"/>
    <property type="match status" value="1"/>
</dbReference>
<gene>
    <name evidence="1" type="primary">rpsP</name>
    <name type="ordered locus">Cagg_2672</name>
</gene>
<comment type="similarity">
    <text evidence="1">Belongs to the bacterial ribosomal protein bS16 family.</text>
</comment>
<evidence type="ECO:0000255" key="1">
    <source>
        <dbReference type="HAMAP-Rule" id="MF_00385"/>
    </source>
</evidence>
<evidence type="ECO:0000305" key="2"/>
<name>RS16_CHLAD</name>
<keyword id="KW-0687">Ribonucleoprotein</keyword>
<keyword id="KW-0689">Ribosomal protein</keyword>
<accession>B8G4R4</accession>
<feature type="chain" id="PRO_1000196365" description="Small ribosomal subunit protein bS16">
    <location>
        <begin position="1"/>
        <end position="89"/>
    </location>
</feature>
<sequence length="89" mass="10140">MVKIRLRRTGKTKQPSYRIVVADSRSPRDGKFIETIGYYLPTRQPKVLEVNADRARYWLGVGAQPTDVVVKLLKRVNILDEQGKVVAES</sequence>
<protein>
    <recommendedName>
        <fullName evidence="1">Small ribosomal subunit protein bS16</fullName>
    </recommendedName>
    <alternativeName>
        <fullName evidence="2">30S ribosomal protein S16</fullName>
    </alternativeName>
</protein>
<organism>
    <name type="scientific">Chloroflexus aggregans (strain MD-66 / DSM 9485)</name>
    <dbReference type="NCBI Taxonomy" id="326427"/>
    <lineage>
        <taxon>Bacteria</taxon>
        <taxon>Bacillati</taxon>
        <taxon>Chloroflexota</taxon>
        <taxon>Chloroflexia</taxon>
        <taxon>Chloroflexales</taxon>
        <taxon>Chloroflexineae</taxon>
        <taxon>Chloroflexaceae</taxon>
        <taxon>Chloroflexus</taxon>
    </lineage>
</organism>
<proteinExistence type="inferred from homology"/>
<reference key="1">
    <citation type="submission" date="2008-12" db="EMBL/GenBank/DDBJ databases">
        <title>Complete sequence of Chloroflexus aggregans DSM 9485.</title>
        <authorList>
            <consortium name="US DOE Joint Genome Institute"/>
            <person name="Lucas S."/>
            <person name="Copeland A."/>
            <person name="Lapidus A."/>
            <person name="Glavina del Rio T."/>
            <person name="Dalin E."/>
            <person name="Tice H."/>
            <person name="Pitluck S."/>
            <person name="Foster B."/>
            <person name="Larimer F."/>
            <person name="Land M."/>
            <person name="Hauser L."/>
            <person name="Kyrpides N."/>
            <person name="Mikhailova N."/>
            <person name="Bryant D.A."/>
            <person name="Richardson P."/>
        </authorList>
    </citation>
    <scope>NUCLEOTIDE SEQUENCE [LARGE SCALE GENOMIC DNA]</scope>
    <source>
        <strain>MD-66 / DSM 9485</strain>
    </source>
</reference>